<comment type="function">
    <text evidence="1 4">Catalyzes the phosphorylation of glucose using polyphosphate or ATP as the phosphoryl donor (PubMed:8617763). Polyphosphate, rather than ATP, seems to be the major phosphate donor for the enzyme in M.tuberculosis (By similarity).</text>
</comment>
<comment type="catalytic activity">
    <reaction evidence="4">
        <text>[phosphate](n) + D-glucose = [phosphate](n-1) + D-glucose 6-phosphate + H(+)</text>
        <dbReference type="Rhea" id="RHEA:22036"/>
        <dbReference type="Rhea" id="RHEA-COMP:9859"/>
        <dbReference type="Rhea" id="RHEA-COMP:14279"/>
        <dbReference type="ChEBI" id="CHEBI:4167"/>
        <dbReference type="ChEBI" id="CHEBI:15378"/>
        <dbReference type="ChEBI" id="CHEBI:16838"/>
        <dbReference type="ChEBI" id="CHEBI:61548"/>
        <dbReference type="EC" id="2.7.1.63"/>
    </reaction>
</comment>
<comment type="catalytic activity">
    <reaction evidence="4">
        <text>D-glucose + ATP = D-glucose 6-phosphate + ADP + H(+)</text>
        <dbReference type="Rhea" id="RHEA:17825"/>
        <dbReference type="ChEBI" id="CHEBI:4167"/>
        <dbReference type="ChEBI" id="CHEBI:15378"/>
        <dbReference type="ChEBI" id="CHEBI:30616"/>
        <dbReference type="ChEBI" id="CHEBI:61548"/>
        <dbReference type="ChEBI" id="CHEBI:456216"/>
        <dbReference type="EC" id="2.7.1.2"/>
    </reaction>
</comment>
<comment type="subunit">
    <text evidence="1">Homodimer.</text>
</comment>
<comment type="miscellaneous">
    <text evidence="7">Was identified as a high-confidence drug target.</text>
</comment>
<comment type="miscellaneous">
    <text evidence="1">The poly(P)- and ATP-dependent glucokinase reactions both follow an ordered Bi-Bi mechanism, with glucose being the second substrate to bind and glucose 6-phosphate being released last. The mechanism of poly(P) utilization is not strictly processive and is most likely nonprocessive, where there is dissociation of poly(P) prior to complete utilization.</text>
</comment>
<comment type="similarity">
    <text evidence="6">Belongs to the ROK (NagC/XylR) family.</text>
</comment>
<feature type="chain" id="PRO_0000058536" description="Polyphosphate glucokinase">
    <location>
        <begin position="1"/>
        <end position="265"/>
    </location>
</feature>
<feature type="region of interest" description="Disordered" evidence="3">
    <location>
        <begin position="1"/>
        <end position="22"/>
    </location>
</feature>
<feature type="compositionally biased region" description="Polar residues" evidence="3">
    <location>
        <begin position="1"/>
        <end position="18"/>
    </location>
</feature>
<feature type="binding site" evidence="2">
    <location>
        <begin position="24"/>
        <end position="29"/>
    </location>
    <ligand>
        <name>ATP</name>
        <dbReference type="ChEBI" id="CHEBI:30616"/>
    </ligand>
</feature>
<feature type="sequence conflict" description="In Ref. 1; AAC43638." evidence="6" ref="1">
    <original>I</original>
    <variation>T</variation>
    <location>
        <position position="203"/>
    </location>
</feature>
<feature type="sequence conflict" description="In Ref. 1; AAC43638." evidence="6" ref="1">
    <original>R</original>
    <variation>C</variation>
    <location>
        <position position="238"/>
    </location>
</feature>
<protein>
    <recommendedName>
        <fullName evidence="5">Polyphosphate glucokinase</fullName>
        <shortName evidence="5">Poly(P) glucokinase</shortName>
        <ecNumber evidence="4">2.7.1.63</ecNumber>
    </recommendedName>
    <alternativeName>
        <fullName evidence="5">ATP-dependent glucokinase</fullName>
        <ecNumber evidence="4">2.7.1.2</ecNumber>
    </alternativeName>
    <alternativeName>
        <fullName>Polyphosphate--glucose phosphotransferase</fullName>
    </alternativeName>
</protein>
<dbReference type="EC" id="2.7.1.63" evidence="4"/>
<dbReference type="EC" id="2.7.1.2" evidence="4"/>
<dbReference type="EMBL" id="U44834">
    <property type="protein sequence ID" value="AAC43638.1"/>
    <property type="molecule type" value="Genomic_DNA"/>
</dbReference>
<dbReference type="EMBL" id="AL123456">
    <property type="protein sequence ID" value="CCP45500.1"/>
    <property type="molecule type" value="Genomic_DNA"/>
</dbReference>
<dbReference type="PIR" id="A70531">
    <property type="entry name" value="A70531"/>
</dbReference>
<dbReference type="RefSeq" id="NP_217218.1">
    <property type="nucleotide sequence ID" value="NC_000962.3"/>
</dbReference>
<dbReference type="RefSeq" id="WP_003911949.1">
    <property type="nucleotide sequence ID" value="NZ_NVQJ01000017.1"/>
</dbReference>
<dbReference type="SMR" id="P9WIN1"/>
<dbReference type="FunCoup" id="P9WIN1">
    <property type="interactions" value="138"/>
</dbReference>
<dbReference type="STRING" id="83332.Rv2702"/>
<dbReference type="PaxDb" id="83332-Rv2702"/>
<dbReference type="DNASU" id="887313"/>
<dbReference type="GeneID" id="887313"/>
<dbReference type="KEGG" id="mtu:Rv2702"/>
<dbReference type="KEGG" id="mtv:RVBD_2702"/>
<dbReference type="TubercuList" id="Rv2702"/>
<dbReference type="eggNOG" id="COG1940">
    <property type="taxonomic scope" value="Bacteria"/>
</dbReference>
<dbReference type="InParanoid" id="P9WIN1"/>
<dbReference type="OrthoDB" id="849313at2"/>
<dbReference type="PhylomeDB" id="P9WIN1"/>
<dbReference type="BioCyc" id="MetaCyc:G185E-6950-MONOMER"/>
<dbReference type="BRENDA" id="2.7.1.63">
    <property type="organism ID" value="3445"/>
</dbReference>
<dbReference type="PHI-base" id="PHI:3636"/>
<dbReference type="Proteomes" id="UP000001584">
    <property type="component" value="Chromosome"/>
</dbReference>
<dbReference type="GO" id="GO:0005524">
    <property type="term" value="F:ATP binding"/>
    <property type="evidence" value="ECO:0007669"/>
    <property type="project" value="UniProtKB-KW"/>
</dbReference>
<dbReference type="GO" id="GO:0004340">
    <property type="term" value="F:glucokinase activity"/>
    <property type="evidence" value="ECO:0000314"/>
    <property type="project" value="MTBBASE"/>
</dbReference>
<dbReference type="GO" id="GO:0047330">
    <property type="term" value="F:polyphosphate-glucose phosphotransferase activity"/>
    <property type="evidence" value="ECO:0000314"/>
    <property type="project" value="MTBBASE"/>
</dbReference>
<dbReference type="CDD" id="cd24058">
    <property type="entry name" value="ASKHA_NBD_ROK_PPGK"/>
    <property type="match status" value="1"/>
</dbReference>
<dbReference type="FunFam" id="3.30.420.40:FF:000412">
    <property type="entry name" value="Polyphosphate glucokinase"/>
    <property type="match status" value="1"/>
</dbReference>
<dbReference type="FunFam" id="3.30.420.40:FF:000443">
    <property type="entry name" value="Polyphosphate glucokinase"/>
    <property type="match status" value="1"/>
</dbReference>
<dbReference type="Gene3D" id="3.30.420.40">
    <property type="match status" value="2"/>
</dbReference>
<dbReference type="InterPro" id="IPR043129">
    <property type="entry name" value="ATPase_NBD"/>
</dbReference>
<dbReference type="InterPro" id="IPR000600">
    <property type="entry name" value="ROK"/>
</dbReference>
<dbReference type="NCBIfam" id="NF045942">
    <property type="entry name" value="PolPhglucPhase"/>
    <property type="match status" value="1"/>
</dbReference>
<dbReference type="PANTHER" id="PTHR18964:SF146">
    <property type="entry name" value="POLYPHOSPHATE GLUCOKINASE"/>
    <property type="match status" value="1"/>
</dbReference>
<dbReference type="PANTHER" id="PTHR18964">
    <property type="entry name" value="ROK (REPRESSOR, ORF, KINASE) FAMILY"/>
    <property type="match status" value="1"/>
</dbReference>
<dbReference type="Pfam" id="PF00480">
    <property type="entry name" value="ROK"/>
    <property type="match status" value="1"/>
</dbReference>
<dbReference type="SUPFAM" id="SSF53067">
    <property type="entry name" value="Actin-like ATPase domain"/>
    <property type="match status" value="1"/>
</dbReference>
<sequence>MTSTGPETSETPGATTQRHGFGIDVGGSGIKGGIVDLDTGQLIGDRIKLLTPQPATPLAVAKTIAEVVNGFGWRGPLGVTYPGVVTHGVVRTAANVDKSWIGTNARDTIGAELGGQQVTILNDADAAGLAETRYGAGKNNPGLVVLLTFGTGIGSAVIHNGTLIPNTEFGHLEVGGKEAEERAASSVKEKNDWTYPKWAKQVIRVLIAIENAIWPDLFIAGGGISRKADKWVPLLENRTPVVPAALQNTAGIVGAAMASVADTTH</sequence>
<keyword id="KW-0067">ATP-binding</keyword>
<keyword id="KW-0418">Kinase</keyword>
<keyword id="KW-0547">Nucleotide-binding</keyword>
<keyword id="KW-1185">Reference proteome</keyword>
<keyword id="KW-0808">Transferase</keyword>
<gene>
    <name evidence="5" type="primary">ppgK</name>
    <name type="ordered locus">Rv2702</name>
    <name type="ORF">MTCY05A6.23</name>
</gene>
<organism>
    <name type="scientific">Mycobacterium tuberculosis (strain ATCC 25618 / H37Rv)</name>
    <dbReference type="NCBI Taxonomy" id="83332"/>
    <lineage>
        <taxon>Bacteria</taxon>
        <taxon>Bacillati</taxon>
        <taxon>Actinomycetota</taxon>
        <taxon>Actinomycetes</taxon>
        <taxon>Mycobacteriales</taxon>
        <taxon>Mycobacteriaceae</taxon>
        <taxon>Mycobacterium</taxon>
        <taxon>Mycobacterium tuberculosis complex</taxon>
    </lineage>
</organism>
<reference key="1">
    <citation type="journal article" date="1996" name="J. Biol. Chem.">
        <title>Cloning, expression, and characterization of polyphosphate glucokinase from Mycobacterium tuberculosis.</title>
        <authorList>
            <person name="Hsieh P.-C."/>
            <person name="Shenoy B.C."/>
            <person name="Samols D."/>
            <person name="Phillips N.F.B."/>
        </authorList>
    </citation>
    <scope>NUCLEOTIDE SEQUENCE [GENOMIC DNA]</scope>
    <scope>FUNCTION</scope>
    <scope>CATALYTIC ACTIVITY</scope>
    <source>
        <strain>ATCC 25618 / H37Rv</strain>
    </source>
</reference>
<reference key="2">
    <citation type="journal article" date="1998" name="Nature">
        <title>Deciphering the biology of Mycobacterium tuberculosis from the complete genome sequence.</title>
        <authorList>
            <person name="Cole S.T."/>
            <person name="Brosch R."/>
            <person name="Parkhill J."/>
            <person name="Garnier T."/>
            <person name="Churcher C.M."/>
            <person name="Harris D.E."/>
            <person name="Gordon S.V."/>
            <person name="Eiglmeier K."/>
            <person name="Gas S."/>
            <person name="Barry C.E. III"/>
            <person name="Tekaia F."/>
            <person name="Badcock K."/>
            <person name="Basham D."/>
            <person name="Brown D."/>
            <person name="Chillingworth T."/>
            <person name="Connor R."/>
            <person name="Davies R.M."/>
            <person name="Devlin K."/>
            <person name="Feltwell T."/>
            <person name="Gentles S."/>
            <person name="Hamlin N."/>
            <person name="Holroyd S."/>
            <person name="Hornsby T."/>
            <person name="Jagels K."/>
            <person name="Krogh A."/>
            <person name="McLean J."/>
            <person name="Moule S."/>
            <person name="Murphy L.D."/>
            <person name="Oliver S."/>
            <person name="Osborne J."/>
            <person name="Quail M.A."/>
            <person name="Rajandream M.A."/>
            <person name="Rogers J."/>
            <person name="Rutter S."/>
            <person name="Seeger K."/>
            <person name="Skelton S."/>
            <person name="Squares S."/>
            <person name="Squares R."/>
            <person name="Sulston J.E."/>
            <person name="Taylor K."/>
            <person name="Whitehead S."/>
            <person name="Barrell B.G."/>
        </authorList>
    </citation>
    <scope>NUCLEOTIDE SEQUENCE [LARGE SCALE GENOMIC DNA]</scope>
    <source>
        <strain>ATCC 25618 / H37Rv</strain>
    </source>
</reference>
<reference key="3">
    <citation type="journal article" date="2008" name="BMC Syst. Biol.">
        <title>targetTB: a target identification pipeline for Mycobacterium tuberculosis through an interactome, reactome and genome-scale structural analysis.</title>
        <authorList>
            <person name="Raman K."/>
            <person name="Yeturu K."/>
            <person name="Chandra N."/>
        </authorList>
    </citation>
    <scope>IDENTIFICATION AS A DRUG TARGET [LARGE SCALE ANALYSIS]</scope>
</reference>
<reference key="4">
    <citation type="journal article" date="2011" name="Mol. Cell. Proteomics">
        <title>Proteogenomic analysis of Mycobacterium tuberculosis by high resolution mass spectrometry.</title>
        <authorList>
            <person name="Kelkar D.S."/>
            <person name="Kumar D."/>
            <person name="Kumar P."/>
            <person name="Balakrishnan L."/>
            <person name="Muthusamy B."/>
            <person name="Yadav A.K."/>
            <person name="Shrivastava P."/>
            <person name="Marimuthu A."/>
            <person name="Anand S."/>
            <person name="Sundaram H."/>
            <person name="Kingsbury R."/>
            <person name="Harsha H.C."/>
            <person name="Nair B."/>
            <person name="Prasad T.S."/>
            <person name="Chauhan D.S."/>
            <person name="Katoch K."/>
            <person name="Katoch V.M."/>
            <person name="Kumar P."/>
            <person name="Chaerkady R."/>
            <person name="Ramachandran S."/>
            <person name="Dash D."/>
            <person name="Pandey A."/>
        </authorList>
    </citation>
    <scope>IDENTIFICATION BY MASS SPECTROMETRY [LARGE SCALE ANALYSIS]</scope>
    <source>
        <strain>ATCC 25618 / H37Rv</strain>
    </source>
</reference>
<proteinExistence type="evidence at protein level"/>
<name>PPGK_MYCTU</name>
<evidence type="ECO:0000250" key="1">
    <source>
        <dbReference type="UniProtKB" id="A5U654"/>
    </source>
</evidence>
<evidence type="ECO:0000255" key="2"/>
<evidence type="ECO:0000256" key="3">
    <source>
        <dbReference type="SAM" id="MobiDB-lite"/>
    </source>
</evidence>
<evidence type="ECO:0000269" key="4">
    <source>
    </source>
</evidence>
<evidence type="ECO:0000303" key="5">
    <source>
    </source>
</evidence>
<evidence type="ECO:0000305" key="6"/>
<evidence type="ECO:0000305" key="7">
    <source>
    </source>
</evidence>
<accession>P9WIN1</accession>
<accession>L0TAD9</accession>
<accession>O07204</accession>
<accession>Q59568</accession>